<comment type="function">
    <text evidence="1">Catalyzes the reversible conversion of ribose-5-phosphate to ribulose 5-phosphate.</text>
</comment>
<comment type="catalytic activity">
    <reaction evidence="1">
        <text>aldehydo-D-ribose 5-phosphate = D-ribulose 5-phosphate</text>
        <dbReference type="Rhea" id="RHEA:14657"/>
        <dbReference type="ChEBI" id="CHEBI:58121"/>
        <dbReference type="ChEBI" id="CHEBI:58273"/>
        <dbReference type="EC" id="5.3.1.6"/>
    </reaction>
</comment>
<comment type="pathway">
    <text evidence="1">Carbohydrate degradation; pentose phosphate pathway; D-ribose 5-phosphate from D-ribulose 5-phosphate (non-oxidative stage): step 1/1.</text>
</comment>
<comment type="subunit">
    <text evidence="1">Homodimer.</text>
</comment>
<comment type="similarity">
    <text evidence="1">Belongs to the ribose 5-phosphate isomerase family.</text>
</comment>
<feature type="chain" id="PRO_1000194706" description="Ribose-5-phosphate isomerase A">
    <location>
        <begin position="1"/>
        <end position="219"/>
    </location>
</feature>
<feature type="active site" description="Proton acceptor" evidence="1">
    <location>
        <position position="103"/>
    </location>
</feature>
<feature type="binding site" evidence="1">
    <location>
        <begin position="28"/>
        <end position="31"/>
    </location>
    <ligand>
        <name>substrate</name>
    </ligand>
</feature>
<feature type="binding site" evidence="1">
    <location>
        <begin position="81"/>
        <end position="84"/>
    </location>
    <ligand>
        <name>substrate</name>
    </ligand>
</feature>
<feature type="binding site" evidence="1">
    <location>
        <begin position="94"/>
        <end position="97"/>
    </location>
    <ligand>
        <name>substrate</name>
    </ligand>
</feature>
<feature type="binding site" evidence="1">
    <location>
        <position position="121"/>
    </location>
    <ligand>
        <name>substrate</name>
    </ligand>
</feature>
<name>RPIA_ECO45</name>
<evidence type="ECO:0000255" key="1">
    <source>
        <dbReference type="HAMAP-Rule" id="MF_00170"/>
    </source>
</evidence>
<sequence length="219" mass="22860">MTQDELKKAVGWAALQYVQPGTIVGVGTGSTAAHFIDALGTMKGQIEGAVSSSDASTEKLKSLGIHVFDLNEVDSLGIYVDGADEINGHMQMIKGGGAALTREKIIASVAEKFICIADASKQVDILGKFPLPVEVIPMARSAVARQLVKLGGRPEYRQGVVTDNGNVILDVHGMEILDPIAMENAINAIPGVVTVGLFANRGADVALIGTPDGVKTIVK</sequence>
<reference key="1">
    <citation type="journal article" date="2009" name="PLoS Genet.">
        <title>Organised genome dynamics in the Escherichia coli species results in highly diverse adaptive paths.</title>
        <authorList>
            <person name="Touchon M."/>
            <person name="Hoede C."/>
            <person name="Tenaillon O."/>
            <person name="Barbe V."/>
            <person name="Baeriswyl S."/>
            <person name="Bidet P."/>
            <person name="Bingen E."/>
            <person name="Bonacorsi S."/>
            <person name="Bouchier C."/>
            <person name="Bouvet O."/>
            <person name="Calteau A."/>
            <person name="Chiapello H."/>
            <person name="Clermont O."/>
            <person name="Cruveiller S."/>
            <person name="Danchin A."/>
            <person name="Diard M."/>
            <person name="Dossat C."/>
            <person name="Karoui M.E."/>
            <person name="Frapy E."/>
            <person name="Garry L."/>
            <person name="Ghigo J.M."/>
            <person name="Gilles A.M."/>
            <person name="Johnson J."/>
            <person name="Le Bouguenec C."/>
            <person name="Lescat M."/>
            <person name="Mangenot S."/>
            <person name="Martinez-Jehanne V."/>
            <person name="Matic I."/>
            <person name="Nassif X."/>
            <person name="Oztas S."/>
            <person name="Petit M.A."/>
            <person name="Pichon C."/>
            <person name="Rouy Z."/>
            <person name="Ruf C.S."/>
            <person name="Schneider D."/>
            <person name="Tourret J."/>
            <person name="Vacherie B."/>
            <person name="Vallenet D."/>
            <person name="Medigue C."/>
            <person name="Rocha E.P.C."/>
            <person name="Denamur E."/>
        </authorList>
    </citation>
    <scope>NUCLEOTIDE SEQUENCE [LARGE SCALE GENOMIC DNA]</scope>
    <source>
        <strain>S88 / ExPEC</strain>
    </source>
</reference>
<gene>
    <name evidence="1" type="primary">rpiA</name>
    <name type="ordered locus">ECS88_3193</name>
</gene>
<proteinExistence type="inferred from homology"/>
<protein>
    <recommendedName>
        <fullName evidence="1">Ribose-5-phosphate isomerase A</fullName>
        <ecNumber evidence="1">5.3.1.6</ecNumber>
    </recommendedName>
    <alternativeName>
        <fullName evidence="1">Phosphoriboisomerase A</fullName>
        <shortName evidence="1">PRI</shortName>
    </alternativeName>
</protein>
<accession>B7MM99</accession>
<dbReference type="EC" id="5.3.1.6" evidence="1"/>
<dbReference type="EMBL" id="CU928161">
    <property type="protein sequence ID" value="CAR04428.1"/>
    <property type="molecule type" value="Genomic_DNA"/>
</dbReference>
<dbReference type="RefSeq" id="WP_000189743.1">
    <property type="nucleotide sequence ID" value="NC_011742.1"/>
</dbReference>
<dbReference type="SMR" id="B7MM99"/>
<dbReference type="GeneID" id="93779085"/>
<dbReference type="KEGG" id="ecz:ECS88_3193"/>
<dbReference type="HOGENOM" id="CLU_056590_1_1_6"/>
<dbReference type="UniPathway" id="UPA00115">
    <property type="reaction ID" value="UER00412"/>
</dbReference>
<dbReference type="Proteomes" id="UP000000747">
    <property type="component" value="Chromosome"/>
</dbReference>
<dbReference type="GO" id="GO:0005829">
    <property type="term" value="C:cytosol"/>
    <property type="evidence" value="ECO:0007669"/>
    <property type="project" value="TreeGrafter"/>
</dbReference>
<dbReference type="GO" id="GO:0004751">
    <property type="term" value="F:ribose-5-phosphate isomerase activity"/>
    <property type="evidence" value="ECO:0007669"/>
    <property type="project" value="UniProtKB-UniRule"/>
</dbReference>
<dbReference type="GO" id="GO:0006014">
    <property type="term" value="P:D-ribose metabolic process"/>
    <property type="evidence" value="ECO:0007669"/>
    <property type="project" value="TreeGrafter"/>
</dbReference>
<dbReference type="GO" id="GO:0009052">
    <property type="term" value="P:pentose-phosphate shunt, non-oxidative branch"/>
    <property type="evidence" value="ECO:0007669"/>
    <property type="project" value="UniProtKB-UniRule"/>
</dbReference>
<dbReference type="CDD" id="cd01398">
    <property type="entry name" value="RPI_A"/>
    <property type="match status" value="1"/>
</dbReference>
<dbReference type="FunFam" id="3.30.70.260:FF:000004">
    <property type="entry name" value="Ribose-5-phosphate isomerase A"/>
    <property type="match status" value="1"/>
</dbReference>
<dbReference type="FunFam" id="3.40.50.1360:FF:000001">
    <property type="entry name" value="Ribose-5-phosphate isomerase A"/>
    <property type="match status" value="1"/>
</dbReference>
<dbReference type="Gene3D" id="3.30.70.260">
    <property type="match status" value="1"/>
</dbReference>
<dbReference type="Gene3D" id="3.40.50.1360">
    <property type="match status" value="1"/>
</dbReference>
<dbReference type="HAMAP" id="MF_00170">
    <property type="entry name" value="Rib_5P_isom_A"/>
    <property type="match status" value="1"/>
</dbReference>
<dbReference type="InterPro" id="IPR037171">
    <property type="entry name" value="NagB/RpiA_transferase-like"/>
</dbReference>
<dbReference type="InterPro" id="IPR020672">
    <property type="entry name" value="Ribose5P_isomerase_typA_subgr"/>
</dbReference>
<dbReference type="InterPro" id="IPR004788">
    <property type="entry name" value="Ribose5P_isomerase_type_A"/>
</dbReference>
<dbReference type="NCBIfam" id="NF001924">
    <property type="entry name" value="PRK00702.1"/>
    <property type="match status" value="1"/>
</dbReference>
<dbReference type="NCBIfam" id="TIGR00021">
    <property type="entry name" value="rpiA"/>
    <property type="match status" value="1"/>
</dbReference>
<dbReference type="PANTHER" id="PTHR11934">
    <property type="entry name" value="RIBOSE-5-PHOSPHATE ISOMERASE"/>
    <property type="match status" value="1"/>
</dbReference>
<dbReference type="PANTHER" id="PTHR11934:SF0">
    <property type="entry name" value="RIBOSE-5-PHOSPHATE ISOMERASE"/>
    <property type="match status" value="1"/>
</dbReference>
<dbReference type="Pfam" id="PF06026">
    <property type="entry name" value="Rib_5-P_isom_A"/>
    <property type="match status" value="1"/>
</dbReference>
<dbReference type="SUPFAM" id="SSF75445">
    <property type="entry name" value="D-ribose-5-phosphate isomerase (RpiA), lid domain"/>
    <property type="match status" value="1"/>
</dbReference>
<dbReference type="SUPFAM" id="SSF100950">
    <property type="entry name" value="NagB/RpiA/CoA transferase-like"/>
    <property type="match status" value="1"/>
</dbReference>
<keyword id="KW-0413">Isomerase</keyword>
<keyword id="KW-1185">Reference proteome</keyword>
<organism>
    <name type="scientific">Escherichia coli O45:K1 (strain S88 / ExPEC)</name>
    <dbReference type="NCBI Taxonomy" id="585035"/>
    <lineage>
        <taxon>Bacteria</taxon>
        <taxon>Pseudomonadati</taxon>
        <taxon>Pseudomonadota</taxon>
        <taxon>Gammaproteobacteria</taxon>
        <taxon>Enterobacterales</taxon>
        <taxon>Enterobacteriaceae</taxon>
        <taxon>Escherichia</taxon>
    </lineage>
</organism>